<dbReference type="EMBL" id="AC010761">
    <property type="status" value="NOT_ANNOTATED_CDS"/>
    <property type="molecule type" value="Genomic_DNA"/>
</dbReference>
<dbReference type="EMBL" id="CH471159">
    <property type="protein sequence ID" value="EAW51134.1"/>
    <property type="molecule type" value="Genomic_DNA"/>
</dbReference>
<dbReference type="EMBL" id="BC014072">
    <property type="protein sequence ID" value="AAH14072.1"/>
    <property type="molecule type" value="mRNA"/>
</dbReference>
<dbReference type="CCDS" id="CCDS11242.1">
    <molecule id="Q96CP7-1"/>
</dbReference>
<dbReference type="CCDS" id="CCDS54102.1">
    <molecule id="Q96CP7-2"/>
</dbReference>
<dbReference type="RefSeq" id="NP_001153879.1">
    <molecule id="Q96CP7-2"/>
    <property type="nucleotide sequence ID" value="NM_001160407.2"/>
</dbReference>
<dbReference type="RefSeq" id="NP_612472.1">
    <molecule id="Q96CP7-1"/>
    <property type="nucleotide sequence ID" value="NM_138463.4"/>
</dbReference>
<dbReference type="BioGRID" id="125493">
    <property type="interactions" value="24"/>
</dbReference>
<dbReference type="FunCoup" id="Q96CP7">
    <property type="interactions" value="595"/>
</dbReference>
<dbReference type="IntAct" id="Q96CP7">
    <property type="interactions" value="20"/>
</dbReference>
<dbReference type="STRING" id="9606.ENSP00000292090"/>
<dbReference type="iPTMnet" id="Q96CP7"/>
<dbReference type="PhosphoSitePlus" id="Q96CP7"/>
<dbReference type="SwissPalm" id="Q96CP7"/>
<dbReference type="BioMuta" id="TLCD1"/>
<dbReference type="DMDM" id="74731368"/>
<dbReference type="jPOST" id="Q96CP7"/>
<dbReference type="MassIVE" id="Q96CP7"/>
<dbReference type="PaxDb" id="9606-ENSP00000292090"/>
<dbReference type="PeptideAtlas" id="Q96CP7"/>
<dbReference type="ProteomicsDB" id="2417"/>
<dbReference type="ProteomicsDB" id="76206">
    <molecule id="Q96CP7-1"/>
</dbReference>
<dbReference type="Pumba" id="Q96CP7"/>
<dbReference type="Antibodypedia" id="51370">
    <property type="antibodies" value="74 antibodies from 15 providers"/>
</dbReference>
<dbReference type="DNASU" id="116238"/>
<dbReference type="Ensembl" id="ENST00000292090.8">
    <molecule id="Q96CP7-1"/>
    <property type="protein sequence ID" value="ENSP00000292090.3"/>
    <property type="gene ID" value="ENSG00000160606.11"/>
</dbReference>
<dbReference type="Ensembl" id="ENST00000394933.7">
    <molecule id="Q96CP7-2"/>
    <property type="protein sequence ID" value="ENSP00000378391.3"/>
    <property type="gene ID" value="ENSG00000160606.11"/>
</dbReference>
<dbReference type="GeneID" id="116238"/>
<dbReference type="KEGG" id="hsa:116238"/>
<dbReference type="MANE-Select" id="ENST00000292090.8">
    <property type="protein sequence ID" value="ENSP00000292090.3"/>
    <property type="RefSeq nucleotide sequence ID" value="NM_138463.4"/>
    <property type="RefSeq protein sequence ID" value="NP_612472.1"/>
</dbReference>
<dbReference type="UCSC" id="uc002hco.4">
    <molecule id="Q96CP7-1"/>
    <property type="organism name" value="human"/>
</dbReference>
<dbReference type="AGR" id="HGNC:25177"/>
<dbReference type="CTD" id="116238"/>
<dbReference type="DisGeNET" id="116238"/>
<dbReference type="GeneCards" id="TLCD1"/>
<dbReference type="HGNC" id="HGNC:25177">
    <property type="gene designation" value="TLCD1"/>
</dbReference>
<dbReference type="HPA" id="ENSG00000160606">
    <property type="expression patterns" value="Low tissue specificity"/>
</dbReference>
<dbReference type="MIM" id="620966">
    <property type="type" value="gene"/>
</dbReference>
<dbReference type="neXtProt" id="NX_Q96CP7"/>
<dbReference type="OpenTargets" id="ENSG00000160606"/>
<dbReference type="PharmGKB" id="PA142670807"/>
<dbReference type="VEuPathDB" id="HostDB:ENSG00000160606"/>
<dbReference type="eggNOG" id="KOG4474">
    <property type="taxonomic scope" value="Eukaryota"/>
</dbReference>
<dbReference type="GeneTree" id="ENSGT01010000222313"/>
<dbReference type="HOGENOM" id="CLU_056440_2_1_1"/>
<dbReference type="InParanoid" id="Q96CP7"/>
<dbReference type="OMA" id="CAGQNGM"/>
<dbReference type="OrthoDB" id="10266980at2759"/>
<dbReference type="PAN-GO" id="Q96CP7">
    <property type="GO annotations" value="5 GO annotations based on evolutionary models"/>
</dbReference>
<dbReference type="PhylomeDB" id="Q96CP7"/>
<dbReference type="TreeFam" id="TF315115"/>
<dbReference type="PathwayCommons" id="Q96CP7"/>
<dbReference type="SignaLink" id="Q96CP7"/>
<dbReference type="BioGRID-ORCS" id="116238">
    <property type="hits" value="104 hits in 1159 CRISPR screens"/>
</dbReference>
<dbReference type="ChiTaRS" id="TLCD1">
    <property type="organism name" value="human"/>
</dbReference>
<dbReference type="GenomeRNAi" id="116238"/>
<dbReference type="Pharos" id="Q96CP7">
    <property type="development level" value="Tdark"/>
</dbReference>
<dbReference type="PRO" id="PR:Q96CP7"/>
<dbReference type="Proteomes" id="UP000005640">
    <property type="component" value="Chromosome 17"/>
</dbReference>
<dbReference type="RNAct" id="Q96CP7">
    <property type="molecule type" value="protein"/>
</dbReference>
<dbReference type="Bgee" id="ENSG00000160606">
    <property type="expression patterns" value="Expressed in right uterine tube and 124 other cell types or tissues"/>
</dbReference>
<dbReference type="ExpressionAtlas" id="Q96CP7">
    <property type="expression patterns" value="baseline and differential"/>
</dbReference>
<dbReference type="GO" id="GO:0005886">
    <property type="term" value="C:plasma membrane"/>
    <property type="evidence" value="ECO:0000314"/>
    <property type="project" value="UniProtKB"/>
</dbReference>
<dbReference type="GO" id="GO:0071709">
    <property type="term" value="P:membrane assembly"/>
    <property type="evidence" value="ECO:0000315"/>
    <property type="project" value="UniProtKB"/>
</dbReference>
<dbReference type="GO" id="GO:0055091">
    <property type="term" value="P:phospholipid homeostasis"/>
    <property type="evidence" value="ECO:0000315"/>
    <property type="project" value="UniProtKB"/>
</dbReference>
<dbReference type="GO" id="GO:0007009">
    <property type="term" value="P:plasma membrane organization"/>
    <property type="evidence" value="ECO:0000315"/>
    <property type="project" value="UniProtKB"/>
</dbReference>
<dbReference type="GO" id="GO:0097035">
    <property type="term" value="P:regulation of membrane lipid distribution"/>
    <property type="evidence" value="ECO:0000315"/>
    <property type="project" value="UniProtKB"/>
</dbReference>
<dbReference type="InterPro" id="IPR006634">
    <property type="entry name" value="TLC-dom"/>
</dbReference>
<dbReference type="InterPro" id="IPR050846">
    <property type="entry name" value="TLCD"/>
</dbReference>
<dbReference type="PANTHER" id="PTHR13439">
    <property type="entry name" value="CT120 PROTEIN"/>
    <property type="match status" value="1"/>
</dbReference>
<dbReference type="PANTHER" id="PTHR13439:SF5">
    <property type="entry name" value="TLC DOMAIN-CONTAINING PROTEIN 1"/>
    <property type="match status" value="1"/>
</dbReference>
<dbReference type="Pfam" id="PF03798">
    <property type="entry name" value="TRAM_LAG1_CLN8"/>
    <property type="match status" value="1"/>
</dbReference>
<dbReference type="SMART" id="SM00724">
    <property type="entry name" value="TLC"/>
    <property type="match status" value="1"/>
</dbReference>
<dbReference type="PROSITE" id="PS50922">
    <property type="entry name" value="TLC"/>
    <property type="match status" value="1"/>
</dbReference>
<evidence type="ECO:0000250" key="1">
    <source>
        <dbReference type="UniProtKB" id="F1NZP5"/>
    </source>
</evidence>
<evidence type="ECO:0000255" key="2"/>
<evidence type="ECO:0000255" key="3">
    <source>
        <dbReference type="PROSITE-ProRule" id="PRU00205"/>
    </source>
</evidence>
<evidence type="ECO:0000269" key="4">
    <source>
    </source>
</evidence>
<evidence type="ECO:0000303" key="5">
    <source>
    </source>
</evidence>
<evidence type="ECO:0000305" key="6">
    <source>
    </source>
</evidence>
<name>TLCD1_HUMAN</name>
<protein>
    <recommendedName>
        <fullName>TLC domain-containing protein 1</fullName>
    </recommendedName>
    <alternativeName>
        <fullName>Calfacilitin</fullName>
    </alternativeName>
</protein>
<gene>
    <name type="primary">TLCD1</name>
</gene>
<feature type="signal peptide" evidence="2">
    <location>
        <begin position="1"/>
        <end position="35"/>
    </location>
</feature>
<feature type="chain" id="PRO_0000285677" description="TLC domain-containing protein 1">
    <location>
        <begin position="36"/>
        <end position="247"/>
    </location>
</feature>
<feature type="topological domain" description="Extracellular" evidence="1">
    <location>
        <begin position="36"/>
        <end position="46"/>
    </location>
</feature>
<feature type="transmembrane region" description="Helical" evidence="2">
    <location>
        <begin position="47"/>
        <end position="67"/>
    </location>
</feature>
<feature type="topological domain" description="Cytoplasmic" evidence="1">
    <location>
        <begin position="68"/>
        <end position="83"/>
    </location>
</feature>
<feature type="transmembrane region" description="Helical" evidence="2">
    <location>
        <begin position="84"/>
        <end position="104"/>
    </location>
</feature>
<feature type="topological domain" description="Extracellular" evidence="1">
    <location>
        <begin position="105"/>
        <end position="123"/>
    </location>
</feature>
<feature type="intramembrane region" description="Helical" evidence="2">
    <location>
        <begin position="124"/>
        <end position="144"/>
    </location>
</feature>
<feature type="topological domain" description="Extracellular" evidence="1">
    <location>
        <begin position="145"/>
        <end position="173"/>
    </location>
</feature>
<feature type="transmembrane region" description="Helical" evidence="2">
    <location>
        <begin position="174"/>
        <end position="194"/>
    </location>
</feature>
<feature type="topological domain" description="Cytoplasmic" evidence="1">
    <location>
        <begin position="195"/>
        <end position="201"/>
    </location>
</feature>
<feature type="transmembrane region" description="Helical" evidence="2">
    <location>
        <begin position="202"/>
        <end position="222"/>
    </location>
</feature>
<feature type="topological domain" description="Extracellular" evidence="1">
    <location>
        <begin position="223"/>
        <end position="247"/>
    </location>
</feature>
<feature type="domain" description="TLC" evidence="3">
    <location>
        <begin position="40"/>
        <end position="234"/>
    </location>
</feature>
<feature type="splice variant" id="VSP_055726" description="In isoform 2." evidence="5">
    <original>MPRLLHPALPLLLGATLTFRALRRALCRLPLPVHVRADPLRTWRWHNLLVSFAHSIVSGIWALLC</original>
    <variation>MGYSAVPKCPPRGRGRDS</variation>
    <location>
        <begin position="1"/>
        <end position="65"/>
    </location>
</feature>
<keyword id="KW-0025">Alternative splicing</keyword>
<keyword id="KW-1003">Cell membrane</keyword>
<keyword id="KW-0472">Membrane</keyword>
<keyword id="KW-1267">Proteomics identification</keyword>
<keyword id="KW-1185">Reference proteome</keyword>
<keyword id="KW-0732">Signal</keyword>
<keyword id="KW-0812">Transmembrane</keyword>
<keyword id="KW-1133">Transmembrane helix</keyword>
<sequence length="247" mass="28548">MPRLLHPALPLLLGATLTFRALRRALCRLPLPVHVRADPLRTWRWHNLLVSFAHSIVSGIWALLCVWQTPDMLVEIETAWSLSGYLLVCFSAGYFIHDTVDIVASGQTRASWEYLVHHVMAMGAFFSGIFWSSFVGGGVLTLLVEVSNIFLTIRMMMKISNAQDHLLYRVNKYVNLVMYFLFRLAPQAYLTHFFLRYVNQRTLGTFLLGILLMLDVMIIIYFSRLLRSDFCPEHVPKKQHKDKFLTE</sequence>
<reference key="1">
    <citation type="journal article" date="2006" name="Nature">
        <title>DNA sequence of human chromosome 17 and analysis of rearrangement in the human lineage.</title>
        <authorList>
            <person name="Zody M.C."/>
            <person name="Garber M."/>
            <person name="Adams D.J."/>
            <person name="Sharpe T."/>
            <person name="Harrow J."/>
            <person name="Lupski J.R."/>
            <person name="Nicholson C."/>
            <person name="Searle S.M."/>
            <person name="Wilming L."/>
            <person name="Young S.K."/>
            <person name="Abouelleil A."/>
            <person name="Allen N.R."/>
            <person name="Bi W."/>
            <person name="Bloom T."/>
            <person name="Borowsky M.L."/>
            <person name="Bugalter B.E."/>
            <person name="Butler J."/>
            <person name="Chang J.L."/>
            <person name="Chen C.-K."/>
            <person name="Cook A."/>
            <person name="Corum B."/>
            <person name="Cuomo C.A."/>
            <person name="de Jong P.J."/>
            <person name="DeCaprio D."/>
            <person name="Dewar K."/>
            <person name="FitzGerald M."/>
            <person name="Gilbert J."/>
            <person name="Gibson R."/>
            <person name="Gnerre S."/>
            <person name="Goldstein S."/>
            <person name="Grafham D.V."/>
            <person name="Grocock R."/>
            <person name="Hafez N."/>
            <person name="Hagopian D.S."/>
            <person name="Hart E."/>
            <person name="Norman C.H."/>
            <person name="Humphray S."/>
            <person name="Jaffe D.B."/>
            <person name="Jones M."/>
            <person name="Kamal M."/>
            <person name="Khodiyar V.K."/>
            <person name="LaButti K."/>
            <person name="Laird G."/>
            <person name="Lehoczky J."/>
            <person name="Liu X."/>
            <person name="Lokyitsang T."/>
            <person name="Loveland J."/>
            <person name="Lui A."/>
            <person name="Macdonald P."/>
            <person name="Major J.E."/>
            <person name="Matthews L."/>
            <person name="Mauceli E."/>
            <person name="McCarroll S.A."/>
            <person name="Mihalev A.H."/>
            <person name="Mudge J."/>
            <person name="Nguyen C."/>
            <person name="Nicol R."/>
            <person name="O'Leary S.B."/>
            <person name="Osoegawa K."/>
            <person name="Schwartz D.C."/>
            <person name="Shaw-Smith C."/>
            <person name="Stankiewicz P."/>
            <person name="Steward C."/>
            <person name="Swarbreck D."/>
            <person name="Venkataraman V."/>
            <person name="Whittaker C.A."/>
            <person name="Yang X."/>
            <person name="Zimmer A.R."/>
            <person name="Bradley A."/>
            <person name="Hubbard T."/>
            <person name="Birren B.W."/>
            <person name="Rogers J."/>
            <person name="Lander E.S."/>
            <person name="Nusbaum C."/>
        </authorList>
    </citation>
    <scope>NUCLEOTIDE SEQUENCE [LARGE SCALE GENOMIC DNA]</scope>
</reference>
<reference key="2">
    <citation type="submission" date="2011-07" db="EMBL/GenBank/DDBJ databases">
        <authorList>
            <person name="Mural R.J."/>
            <person name="Istrail S."/>
            <person name="Sutton G.G."/>
            <person name="Florea L."/>
            <person name="Halpern A.L."/>
            <person name="Mobarry C.M."/>
            <person name="Lippert R."/>
            <person name="Walenz B."/>
            <person name="Shatkay H."/>
            <person name="Dew I."/>
            <person name="Miller J.R."/>
            <person name="Flanigan M.J."/>
            <person name="Edwards N.J."/>
            <person name="Bolanos R."/>
            <person name="Fasulo D."/>
            <person name="Halldorsson B.V."/>
            <person name="Hannenhalli S."/>
            <person name="Turner R."/>
            <person name="Yooseph S."/>
            <person name="Lu F."/>
            <person name="Nusskern D.R."/>
            <person name="Shue B.C."/>
            <person name="Zheng X.H."/>
            <person name="Zhong F."/>
            <person name="Delcher A.L."/>
            <person name="Huson D.H."/>
            <person name="Kravitz S.A."/>
            <person name="Mouchard L."/>
            <person name="Reinert K."/>
            <person name="Remington K.A."/>
            <person name="Clark A.G."/>
            <person name="Waterman M.S."/>
            <person name="Eichler E.E."/>
            <person name="Adams M.D."/>
            <person name="Hunkapiller M.W."/>
            <person name="Myers E.W."/>
            <person name="Venter J.C."/>
        </authorList>
    </citation>
    <scope>NUCLEOTIDE SEQUENCE [LARGE SCALE GENOMIC DNA]</scope>
</reference>
<reference key="3">
    <citation type="journal article" date="2004" name="Genome Res.">
        <title>The status, quality, and expansion of the NIH full-length cDNA project: the Mammalian Gene Collection (MGC).</title>
        <authorList>
            <consortium name="The MGC Project Team"/>
        </authorList>
    </citation>
    <scope>NUCLEOTIDE SEQUENCE [LARGE SCALE MRNA] (ISOFORM 2)</scope>
    <source>
        <tissue>Placenta</tissue>
    </source>
</reference>
<reference key="4">
    <citation type="journal article" date="2018" name="Elife">
        <title>Membrane fluidity is regulated by the C. elegans transmembrane protein FLD-1 and its human homologs TLCD1/2.</title>
        <authorList>
            <person name="Ruiz M."/>
            <person name="Bodhicharla R."/>
            <person name="Svensk E."/>
            <person name="Devkota R."/>
            <person name="Busayavalasa K."/>
            <person name="Palmgren H."/>
            <person name="Staahlman M."/>
            <person name="Boren J."/>
            <person name="Pilon M."/>
        </authorList>
    </citation>
    <scope>FUNCTION</scope>
    <scope>SUBCELLULAR LOCATION</scope>
</reference>
<proteinExistence type="evidence at protein level"/>
<organism>
    <name type="scientific">Homo sapiens</name>
    <name type="common">Human</name>
    <dbReference type="NCBI Taxonomy" id="9606"/>
    <lineage>
        <taxon>Eukaryota</taxon>
        <taxon>Metazoa</taxon>
        <taxon>Chordata</taxon>
        <taxon>Craniata</taxon>
        <taxon>Vertebrata</taxon>
        <taxon>Euteleostomi</taxon>
        <taxon>Mammalia</taxon>
        <taxon>Eutheria</taxon>
        <taxon>Euarchontoglires</taxon>
        <taxon>Primates</taxon>
        <taxon>Haplorrhini</taxon>
        <taxon>Catarrhini</taxon>
        <taxon>Hominidae</taxon>
        <taxon>Homo</taxon>
    </lineage>
</organism>
<comment type="function">
    <text evidence="4">Regulates the composition and fluidity of the plasma membrane (PubMed:30509349). Inhibits the incorporation of membrane-fluidizing phospholipids containing omega-3 long-chain polyunsaturated fatty acids (LCPUFA) and thereby promotes membrane rigidity (PubMed:30509349). Does not appear to have any effect on LCPUFA synthesis (PubMed:30509349).</text>
</comment>
<comment type="interaction">
    <interactant intactId="EBI-11337932">
        <id>Q96CP7</id>
    </interactant>
    <interactant intactId="EBI-13059134">
        <id>Q13520</id>
        <label>AQP6</label>
    </interactant>
    <organismsDiffer>false</organismsDiffer>
    <experiments>3</experiments>
</comment>
<comment type="interaction">
    <interactant intactId="EBI-11337932">
        <id>Q96CP7</id>
    </interactant>
    <interactant intactId="EBI-525714">
        <id>P25942</id>
        <label>CD40</label>
    </interactant>
    <organismsDiffer>false</organismsDiffer>
    <experiments>3</experiments>
</comment>
<comment type="interaction">
    <interactant intactId="EBI-11337932">
        <id>Q96CP7</id>
    </interactant>
    <interactant intactId="EBI-6942903">
        <id>Q96BA8</id>
        <label>CREB3L1</label>
    </interactant>
    <organismsDiffer>false</organismsDiffer>
    <experiments>3</experiments>
</comment>
<comment type="interaction">
    <interactant intactId="EBI-11337932">
        <id>Q96CP7</id>
    </interactant>
    <interactant intactId="EBI-3915253">
        <id>Q15125</id>
        <label>EBP</label>
    </interactant>
    <organismsDiffer>false</organismsDiffer>
    <experiments>3</experiments>
</comment>
<comment type="interaction">
    <interactant intactId="EBI-11337932">
        <id>Q96CP7</id>
    </interactant>
    <interactant intactId="EBI-12175685">
        <id>Q14802-3</id>
        <label>FXYD3</label>
    </interactant>
    <organismsDiffer>false</organismsDiffer>
    <experiments>3</experiments>
</comment>
<comment type="interaction">
    <interactant intactId="EBI-11337932">
        <id>Q96CP7</id>
    </interactant>
    <interactant intactId="EBI-17280858">
        <id>Q8WWF3</id>
        <label>SSMEM1</label>
    </interactant>
    <organismsDiffer>false</organismsDiffer>
    <experiments>3</experiments>
</comment>
<comment type="interaction">
    <interactant intactId="EBI-11337932">
        <id>Q96CP7</id>
    </interactant>
    <interactant intactId="EBI-8638294">
        <id>Q9NUH8</id>
        <label>TMEM14B</label>
    </interactant>
    <organismsDiffer>false</organismsDiffer>
    <experiments>3</experiments>
</comment>
<comment type="interaction">
    <interactant intactId="EBI-11337932">
        <id>Q96CP7</id>
    </interactant>
    <interactant intactId="EBI-11742770">
        <id>Q96HE8</id>
        <label>TMEM80</label>
    </interactant>
    <organismsDiffer>false</organismsDiffer>
    <experiments>3</experiments>
</comment>
<comment type="subcellular location">
    <subcellularLocation>
        <location evidence="6">Cell membrane</location>
        <topology evidence="1">Multi-pass membrane protein</topology>
    </subcellularLocation>
</comment>
<comment type="alternative products">
    <event type="alternative splicing"/>
    <isoform>
        <id>Q96CP7-1</id>
        <name>1</name>
        <sequence type="displayed"/>
    </isoform>
    <isoform>
        <id>Q96CP7-2</id>
        <name>2</name>
        <sequence type="described" ref="VSP_055726"/>
    </isoform>
</comment>
<comment type="caution">
    <text evidence="1 4">Was originally proposed to be a calcium channel facilitator (By similarity). However, a more recent study shows that this protein regulates membrane phospholipid homeostasis (PubMed:30509349). Therefore, any effects on calcium flux are most likely a secondary consequence of defects in membrane composition or fluidity (PubMed:30509349).</text>
</comment>
<accession>Q96CP7</accession>
<accession>A8MYP9</accession>